<keyword id="KW-0021">Allosteric enzyme</keyword>
<keyword id="KW-0067">ATP-binding</keyword>
<keyword id="KW-0215">Deoxyribonucleotide synthesis</keyword>
<keyword id="KW-1015">Disulfide bond</keyword>
<keyword id="KW-0547">Nucleotide-binding</keyword>
<keyword id="KW-0560">Oxidoreductase</keyword>
<keyword id="KW-0677">Repeat</keyword>
<feature type="chain" id="PRO_0000187210" description="Ribonucleoside-diphosphate reductase subunit alpha">
    <location>
        <begin position="1"/>
        <end position="1047"/>
    </location>
</feature>
<feature type="domain" description="ATP-cone 1" evidence="2">
    <location>
        <begin position="9"/>
        <end position="111"/>
    </location>
</feature>
<feature type="domain" description="ATP-cone 2" evidence="2">
    <location>
        <begin position="118"/>
        <end position="219"/>
    </location>
</feature>
<feature type="domain" description="ATP-cone 3" evidence="2">
    <location>
        <begin position="237"/>
        <end position="327"/>
    </location>
</feature>
<feature type="active site" description="Proton acceptor" evidence="1">
    <location>
        <position position="670"/>
    </location>
</feature>
<feature type="active site" description="Cysteine radical intermediate" evidence="1">
    <location>
        <position position="672"/>
    </location>
</feature>
<feature type="active site" description="Proton acceptor" evidence="1">
    <location>
        <position position="674"/>
    </location>
</feature>
<feature type="binding site" evidence="1">
    <location>
        <position position="442"/>
    </location>
    <ligand>
        <name>substrate</name>
    </ligand>
</feature>
<feature type="binding site" evidence="1">
    <location>
        <begin position="457"/>
        <end position="458"/>
    </location>
    <ligand>
        <name>substrate</name>
    </ligand>
</feature>
<feature type="binding site" evidence="1">
    <location>
        <position position="486"/>
    </location>
    <ligand>
        <name>substrate</name>
    </ligand>
</feature>
<feature type="binding site" evidence="1">
    <location>
        <begin position="670"/>
        <end position="674"/>
    </location>
    <ligand>
        <name>substrate</name>
    </ligand>
</feature>
<feature type="binding site" evidence="1">
    <location>
        <begin position="857"/>
        <end position="861"/>
    </location>
    <ligand>
        <name>substrate</name>
    </ligand>
</feature>
<feature type="site" description="Important for hydrogen atom transfer" evidence="1">
    <location>
        <position position="458"/>
    </location>
</feature>
<feature type="site" description="Allosteric effector binding" evidence="1">
    <location>
        <position position="465"/>
    </location>
</feature>
<feature type="site" description="Allosteric effector binding" evidence="1">
    <location>
        <position position="495"/>
    </location>
</feature>
<feature type="site" description="Important for hydrogen atom transfer" evidence="1">
    <location>
        <position position="687"/>
    </location>
</feature>
<feature type="site" description="Important for electron transfer" evidence="1">
    <location>
        <position position="990"/>
    </location>
</feature>
<feature type="site" description="Important for electron transfer" evidence="1">
    <location>
        <position position="991"/>
    </location>
</feature>
<feature type="site" description="Interacts with thioredoxin/glutaredoxin" evidence="1">
    <location>
        <position position="1043"/>
    </location>
</feature>
<feature type="site" description="Interacts with thioredoxin/glutaredoxin" evidence="1">
    <location>
        <position position="1046"/>
    </location>
</feature>
<feature type="disulfide bond" description="Redox-active" evidence="1">
    <location>
        <begin position="458"/>
        <end position="687"/>
    </location>
</feature>
<organism>
    <name type="scientific">Chlamydia muridarum (strain MoPn / Nigg)</name>
    <dbReference type="NCBI Taxonomy" id="243161"/>
    <lineage>
        <taxon>Bacteria</taxon>
        <taxon>Pseudomonadati</taxon>
        <taxon>Chlamydiota</taxon>
        <taxon>Chlamydiia</taxon>
        <taxon>Chlamydiales</taxon>
        <taxon>Chlamydiaceae</taxon>
        <taxon>Chlamydia/Chlamydophila group</taxon>
        <taxon>Chlamydia</taxon>
    </lineage>
</organism>
<proteinExistence type="inferred from homology"/>
<reference key="1">
    <citation type="journal article" date="2000" name="Nucleic Acids Res.">
        <title>Genome sequences of Chlamydia trachomatis MoPn and Chlamydia pneumoniae AR39.</title>
        <authorList>
            <person name="Read T.D."/>
            <person name="Brunham R.C."/>
            <person name="Shen C."/>
            <person name="Gill S.R."/>
            <person name="Heidelberg J.F."/>
            <person name="White O."/>
            <person name="Hickey E.K."/>
            <person name="Peterson J.D."/>
            <person name="Utterback T.R."/>
            <person name="Berry K.J."/>
            <person name="Bass S."/>
            <person name="Linher K.D."/>
            <person name="Weidman J.F."/>
            <person name="Khouri H.M."/>
            <person name="Craven B."/>
            <person name="Bowman C."/>
            <person name="Dodson R.J."/>
            <person name="Gwinn M.L."/>
            <person name="Nelson W.C."/>
            <person name="DeBoy R.T."/>
            <person name="Kolonay J.F."/>
            <person name="McClarty G."/>
            <person name="Salzberg S.L."/>
            <person name="Eisen J.A."/>
            <person name="Fraser C.M."/>
        </authorList>
    </citation>
    <scope>NUCLEOTIDE SEQUENCE [LARGE SCALE GENOMIC DNA]</scope>
    <source>
        <strain>MoPn / Nigg</strain>
    </source>
</reference>
<name>RIR1_CHLMU</name>
<protein>
    <recommendedName>
        <fullName>Ribonucleoside-diphosphate reductase subunit alpha</fullName>
        <ecNumber>1.17.4.1</ecNumber>
    </recommendedName>
    <alternativeName>
        <fullName>Ribonucleotide reductase</fullName>
    </alternativeName>
</protein>
<accession>Q9PL93</accession>
<comment type="function">
    <text evidence="1">Provides the precursors necessary for DNA synthesis. Catalyzes the biosynthesis of deoxyribonucleotides from the corresponding ribonucleotides (By similarity).</text>
</comment>
<comment type="catalytic activity">
    <reaction>
        <text>a 2'-deoxyribonucleoside 5'-diphosphate + [thioredoxin]-disulfide + H2O = a ribonucleoside 5'-diphosphate + [thioredoxin]-dithiol</text>
        <dbReference type="Rhea" id="RHEA:23252"/>
        <dbReference type="Rhea" id="RHEA-COMP:10698"/>
        <dbReference type="Rhea" id="RHEA-COMP:10700"/>
        <dbReference type="ChEBI" id="CHEBI:15377"/>
        <dbReference type="ChEBI" id="CHEBI:29950"/>
        <dbReference type="ChEBI" id="CHEBI:50058"/>
        <dbReference type="ChEBI" id="CHEBI:57930"/>
        <dbReference type="ChEBI" id="CHEBI:73316"/>
        <dbReference type="EC" id="1.17.4.1"/>
    </reaction>
</comment>
<comment type="activity regulation">
    <text evidence="1">Under complex allosteric control mediated by deoxynucleoside triphosphates and ATP binding. The type of nucleotide bound at the specificity site determines substrate preference. It seems probable that ATP makes the enzyme reduce CDP and UDP, dGTP favors ADP reduction and dTTP favors GDP reduction (By similarity).</text>
</comment>
<comment type="subunit">
    <text evidence="1">Tetramer of two alpha and two beta subunits.</text>
</comment>
<comment type="similarity">
    <text evidence="3">Belongs to the ribonucleoside diphosphate reductase large chain family.</text>
</comment>
<gene>
    <name type="primary">nrdA</name>
    <name type="ordered locus">TC_0214</name>
</gene>
<sequence>MVDLQEKQCTIVKRNGMFVPFDRNRIFQALEAAFRDTRRIDDHMPLPEDLENSIRSITHQVVKEVVQKITDGQVVTVERIQDMVESQLYINGLQDVARDYVVYRDDRKAHREKSWQSLSVIRRCGTTVHFNPMKISAALEKAFRATDRIEGMTPDFVREEVNALTQKIVAEIEERCSQQDSRIDIEQIQDIVEQQLMVVGHYATAKNYILYREARARVRDNRVEDQIVEEAPSEETFEVLSKDGSTYMITHSQLLARLARACSRFPETTDAALLTDMAFSNFYSGIKESEVVLACIMAARANIEKEPDYAFVAAELLLDVVYKEALDRSRGDEDLEQVYRDHFKRYIMEGDSYRLNPELKNLFDLDALANAMDLSRDLQFSYMGIQNLYDRYFNHDDGRRLETPQIFWMRVAMGLALKEQDKTYWAITFYNLLSTFRYTPATPTLFNSGMRHSQLSSCYLSTVQDDLVNIYKVISDNAMLSKWAGGIGNDWTAIRATGALIKGTNGKSQGVIPFIKVTNDTAVAVNQGGKRKGAVCVYLEVWHLDYEDFLELRKNTGDDRRRAHDVNTASWIPDLFFKRLQQKGSWTLFSPDDVPGLHDAYGEEFERLYEEYERKVDSGEIRLYKKVEAEDLWRKMLSMLFETGHPWMTFKDPSNIRSAQDHTGVVRCSNLCTEILLNCSETETAVCNLGSVNLVQHILDDGLDEEKLSETISIAVRMLDNVIDINFYPTKEAKEANFAHRAIGLGVMGFQDALYKLDISYASQEAVEFADYSSELISYYAIQASCLLAKERGTYSSYKGSKWDRGLLPIDTIQLLANYRGKDNLQMDTSVRKDWEPIRSLIREHGMRNCQLMAIAPTATISNIIGVTQSIEPTYKHLFVKSNLSGEFTIPNVYLIEKLKKLGIWDADMLDDLKYFDGSLLEIERVPDHIKHIFLTAFEIEPEWILECASRRQKWIDMGQSLNLYLAQPDGKKLSNMYLTAWKKGLKTTYYLRSSSATTVEKSFVDINKRGIQPRWMKNKSASAGIVVERASKTPVCSLEEGCEVCQ</sequence>
<evidence type="ECO:0000250" key="1"/>
<evidence type="ECO:0000255" key="2">
    <source>
        <dbReference type="PROSITE-ProRule" id="PRU00492"/>
    </source>
</evidence>
<evidence type="ECO:0000305" key="3"/>
<dbReference type="EC" id="1.17.4.1"/>
<dbReference type="EMBL" id="AE002160">
    <property type="protein sequence ID" value="AAF39086.1"/>
    <property type="molecule type" value="Genomic_DNA"/>
</dbReference>
<dbReference type="PIR" id="F81728">
    <property type="entry name" value="F81728"/>
</dbReference>
<dbReference type="RefSeq" id="WP_010229837.1">
    <property type="nucleotide sequence ID" value="NZ_CP063055.1"/>
</dbReference>
<dbReference type="SMR" id="Q9PL93"/>
<dbReference type="GeneID" id="1246340"/>
<dbReference type="KEGG" id="cmu:TC_0214"/>
<dbReference type="eggNOG" id="COG0209">
    <property type="taxonomic scope" value="Bacteria"/>
</dbReference>
<dbReference type="eggNOG" id="COG1327">
    <property type="taxonomic scope" value="Bacteria"/>
</dbReference>
<dbReference type="HOGENOM" id="CLU_000404_3_0_0"/>
<dbReference type="OrthoDB" id="9762933at2"/>
<dbReference type="Proteomes" id="UP000000800">
    <property type="component" value="Chromosome"/>
</dbReference>
<dbReference type="GO" id="GO:0005971">
    <property type="term" value="C:ribonucleoside-diphosphate reductase complex"/>
    <property type="evidence" value="ECO:0007669"/>
    <property type="project" value="TreeGrafter"/>
</dbReference>
<dbReference type="GO" id="GO:0005524">
    <property type="term" value="F:ATP binding"/>
    <property type="evidence" value="ECO:0007669"/>
    <property type="project" value="UniProtKB-KW"/>
</dbReference>
<dbReference type="GO" id="GO:0004748">
    <property type="term" value="F:ribonucleoside-diphosphate reductase activity, thioredoxin disulfide as acceptor"/>
    <property type="evidence" value="ECO:0007669"/>
    <property type="project" value="UniProtKB-EC"/>
</dbReference>
<dbReference type="GO" id="GO:0009263">
    <property type="term" value="P:deoxyribonucleotide biosynthetic process"/>
    <property type="evidence" value="ECO:0007669"/>
    <property type="project" value="UniProtKB-KW"/>
</dbReference>
<dbReference type="CDD" id="cd01679">
    <property type="entry name" value="RNR_I"/>
    <property type="match status" value="1"/>
</dbReference>
<dbReference type="FunFam" id="3.20.70.20:FF:000009">
    <property type="entry name" value="Ribonucleoside-diphosphate reductase"/>
    <property type="match status" value="1"/>
</dbReference>
<dbReference type="Gene3D" id="3.20.70.20">
    <property type="match status" value="1"/>
</dbReference>
<dbReference type="InterPro" id="IPR005144">
    <property type="entry name" value="ATP-cone_dom"/>
</dbReference>
<dbReference type="InterPro" id="IPR013346">
    <property type="entry name" value="NrdE_NrdA_C"/>
</dbReference>
<dbReference type="InterPro" id="IPR000788">
    <property type="entry name" value="RNR_lg_C"/>
</dbReference>
<dbReference type="InterPro" id="IPR013509">
    <property type="entry name" value="RNR_lsu_N"/>
</dbReference>
<dbReference type="InterPro" id="IPR008926">
    <property type="entry name" value="RNR_R1-su_N"/>
</dbReference>
<dbReference type="InterPro" id="IPR039718">
    <property type="entry name" value="Rrm1"/>
</dbReference>
<dbReference type="NCBIfam" id="TIGR02506">
    <property type="entry name" value="NrdE_NrdA"/>
    <property type="match status" value="1"/>
</dbReference>
<dbReference type="NCBIfam" id="NF005544">
    <property type="entry name" value="PRK07207.1"/>
    <property type="match status" value="1"/>
</dbReference>
<dbReference type="NCBIfam" id="NF009029">
    <property type="entry name" value="PRK12365.1"/>
    <property type="match status" value="1"/>
</dbReference>
<dbReference type="PANTHER" id="PTHR11573">
    <property type="entry name" value="RIBONUCLEOSIDE-DIPHOSPHATE REDUCTASE LARGE CHAIN"/>
    <property type="match status" value="1"/>
</dbReference>
<dbReference type="PANTHER" id="PTHR11573:SF6">
    <property type="entry name" value="RIBONUCLEOSIDE-DIPHOSPHATE REDUCTASE LARGE SUBUNIT"/>
    <property type="match status" value="1"/>
</dbReference>
<dbReference type="Pfam" id="PF03477">
    <property type="entry name" value="ATP-cone"/>
    <property type="match status" value="2"/>
</dbReference>
<dbReference type="Pfam" id="PF02867">
    <property type="entry name" value="Ribonuc_red_lgC"/>
    <property type="match status" value="1"/>
</dbReference>
<dbReference type="Pfam" id="PF00317">
    <property type="entry name" value="Ribonuc_red_lgN"/>
    <property type="match status" value="1"/>
</dbReference>
<dbReference type="PRINTS" id="PR01183">
    <property type="entry name" value="RIBORDTASEM1"/>
</dbReference>
<dbReference type="SUPFAM" id="SSF51998">
    <property type="entry name" value="PFL-like glycyl radical enzymes"/>
    <property type="match status" value="1"/>
</dbReference>
<dbReference type="SUPFAM" id="SSF48168">
    <property type="entry name" value="R1 subunit of ribonucleotide reductase, N-terminal domain"/>
    <property type="match status" value="1"/>
</dbReference>
<dbReference type="PROSITE" id="PS51161">
    <property type="entry name" value="ATP_CONE"/>
    <property type="match status" value="3"/>
</dbReference>
<dbReference type="PROSITE" id="PS00089">
    <property type="entry name" value="RIBORED_LARGE"/>
    <property type="match status" value="1"/>
</dbReference>